<keyword id="KW-0460">Magnesium</keyword>
<keyword id="KW-0479">Metal-binding</keyword>
<keyword id="KW-1185">Reference proteome</keyword>
<keyword id="KW-0784">Thiamine biosynthesis</keyword>
<keyword id="KW-0808">Transferase</keyword>
<sequence>MKDTLKLYFVCGTVDCSRKNILTVVEEALQAGITLFQFREKGFTALQGKEKIAMAKQLQILCKQYQVPFIIDDDIDLVELIDADGLHIGQNDLPVDEARRRLPDKIIGLSVSTMDEYQKSQLSVVDYIGIGPFNPTQSKADAKPAVGNRTTKAVREINQDIPIVAIGGITSDFVHDIIESGADGIAVISAISKANHIVDATRQLRYEVEKALVNRQKHSDVIK</sequence>
<comment type="function">
    <text evidence="1">Condenses 4-methyl-5-(beta-hydroxyethyl)thiazole monophosphate (THZ-P) and 2-methyl-4-amino-5-hydroxymethyl pyrimidine pyrophosphate (HMP-PP) to form thiamine monophosphate (TMP).</text>
</comment>
<comment type="catalytic activity">
    <reaction evidence="1">
        <text>2-[(2R,5Z)-2-carboxy-4-methylthiazol-5(2H)-ylidene]ethyl phosphate + 4-amino-2-methyl-5-(diphosphooxymethyl)pyrimidine + 2 H(+) = thiamine phosphate + CO2 + diphosphate</text>
        <dbReference type="Rhea" id="RHEA:47844"/>
        <dbReference type="ChEBI" id="CHEBI:15378"/>
        <dbReference type="ChEBI" id="CHEBI:16526"/>
        <dbReference type="ChEBI" id="CHEBI:33019"/>
        <dbReference type="ChEBI" id="CHEBI:37575"/>
        <dbReference type="ChEBI" id="CHEBI:57841"/>
        <dbReference type="ChEBI" id="CHEBI:62899"/>
        <dbReference type="EC" id="2.5.1.3"/>
    </reaction>
</comment>
<comment type="catalytic activity">
    <reaction evidence="1">
        <text>2-(2-carboxy-4-methylthiazol-5-yl)ethyl phosphate + 4-amino-2-methyl-5-(diphosphooxymethyl)pyrimidine + 2 H(+) = thiamine phosphate + CO2 + diphosphate</text>
        <dbReference type="Rhea" id="RHEA:47848"/>
        <dbReference type="ChEBI" id="CHEBI:15378"/>
        <dbReference type="ChEBI" id="CHEBI:16526"/>
        <dbReference type="ChEBI" id="CHEBI:33019"/>
        <dbReference type="ChEBI" id="CHEBI:37575"/>
        <dbReference type="ChEBI" id="CHEBI:57841"/>
        <dbReference type="ChEBI" id="CHEBI:62890"/>
        <dbReference type="EC" id="2.5.1.3"/>
    </reaction>
</comment>
<comment type="catalytic activity">
    <reaction evidence="1">
        <text>4-methyl-5-(2-phosphooxyethyl)-thiazole + 4-amino-2-methyl-5-(diphosphooxymethyl)pyrimidine + H(+) = thiamine phosphate + diphosphate</text>
        <dbReference type="Rhea" id="RHEA:22328"/>
        <dbReference type="ChEBI" id="CHEBI:15378"/>
        <dbReference type="ChEBI" id="CHEBI:33019"/>
        <dbReference type="ChEBI" id="CHEBI:37575"/>
        <dbReference type="ChEBI" id="CHEBI:57841"/>
        <dbReference type="ChEBI" id="CHEBI:58296"/>
        <dbReference type="EC" id="2.5.1.3"/>
    </reaction>
</comment>
<comment type="cofactor">
    <cofactor evidence="1">
        <name>Mg(2+)</name>
        <dbReference type="ChEBI" id="CHEBI:18420"/>
    </cofactor>
    <text evidence="1">Binds 1 Mg(2+) ion per subunit.</text>
</comment>
<comment type="pathway">
    <text evidence="1">Cofactor biosynthesis; thiamine diphosphate biosynthesis; thiamine phosphate from 4-amino-2-methyl-5-diphosphomethylpyrimidine and 4-methyl-5-(2-phosphoethyl)-thiazole: step 1/1.</text>
</comment>
<comment type="similarity">
    <text evidence="1">Belongs to the thiamine-phosphate synthase family.</text>
</comment>
<gene>
    <name evidence="1" type="primary">thiE</name>
    <name type="ordered locus">SAG0842</name>
</gene>
<protein>
    <recommendedName>
        <fullName evidence="1">Thiamine-phosphate synthase</fullName>
        <shortName evidence="1">TP synthase</shortName>
        <shortName evidence="1">TPS</shortName>
        <ecNumber evidence="1">2.5.1.3</ecNumber>
    </recommendedName>
    <alternativeName>
        <fullName evidence="1">Thiamine-phosphate pyrophosphorylase</fullName>
        <shortName evidence="1">TMP pyrophosphorylase</shortName>
        <shortName evidence="1">TMP-PPase</shortName>
    </alternativeName>
</protein>
<organism>
    <name type="scientific">Streptococcus agalactiae serotype V (strain ATCC BAA-611 / 2603 V/R)</name>
    <dbReference type="NCBI Taxonomy" id="208435"/>
    <lineage>
        <taxon>Bacteria</taxon>
        <taxon>Bacillati</taxon>
        <taxon>Bacillota</taxon>
        <taxon>Bacilli</taxon>
        <taxon>Lactobacillales</taxon>
        <taxon>Streptococcaceae</taxon>
        <taxon>Streptococcus</taxon>
    </lineage>
</organism>
<feature type="chain" id="PRO_0000157052" description="Thiamine-phosphate synthase">
    <location>
        <begin position="1"/>
        <end position="223"/>
    </location>
</feature>
<feature type="binding site" evidence="1">
    <location>
        <begin position="37"/>
        <end position="41"/>
    </location>
    <ligand>
        <name>4-amino-2-methyl-5-(diphosphooxymethyl)pyrimidine</name>
        <dbReference type="ChEBI" id="CHEBI:57841"/>
    </ligand>
</feature>
<feature type="binding site" evidence="1">
    <location>
        <position position="72"/>
    </location>
    <ligand>
        <name>4-amino-2-methyl-5-(diphosphooxymethyl)pyrimidine</name>
        <dbReference type="ChEBI" id="CHEBI:57841"/>
    </ligand>
</feature>
<feature type="binding site" evidence="1">
    <location>
        <position position="73"/>
    </location>
    <ligand>
        <name>Mg(2+)</name>
        <dbReference type="ChEBI" id="CHEBI:18420"/>
    </ligand>
</feature>
<feature type="binding site" evidence="1">
    <location>
        <position position="92"/>
    </location>
    <ligand>
        <name>Mg(2+)</name>
        <dbReference type="ChEBI" id="CHEBI:18420"/>
    </ligand>
</feature>
<feature type="binding site" evidence="1">
    <location>
        <position position="110"/>
    </location>
    <ligand>
        <name>4-amino-2-methyl-5-(diphosphooxymethyl)pyrimidine</name>
        <dbReference type="ChEBI" id="CHEBI:57841"/>
    </ligand>
</feature>
<feature type="binding site" evidence="1">
    <location>
        <begin position="136"/>
        <end position="138"/>
    </location>
    <ligand>
        <name>2-[(2R,5Z)-2-carboxy-4-methylthiazol-5(2H)-ylidene]ethyl phosphate</name>
        <dbReference type="ChEBI" id="CHEBI:62899"/>
    </ligand>
</feature>
<feature type="binding site" evidence="1">
    <location>
        <position position="139"/>
    </location>
    <ligand>
        <name>4-amino-2-methyl-5-(diphosphooxymethyl)pyrimidine</name>
        <dbReference type="ChEBI" id="CHEBI:57841"/>
    </ligand>
</feature>
<feature type="binding site" evidence="1">
    <location>
        <position position="168"/>
    </location>
    <ligand>
        <name>2-[(2R,5Z)-2-carboxy-4-methylthiazol-5(2H)-ylidene]ethyl phosphate</name>
        <dbReference type="ChEBI" id="CHEBI:62899"/>
    </ligand>
</feature>
<feature type="binding site" evidence="1">
    <location>
        <begin position="188"/>
        <end position="189"/>
    </location>
    <ligand>
        <name>2-[(2R,5Z)-2-carboxy-4-methylthiazol-5(2H)-ylidene]ethyl phosphate</name>
        <dbReference type="ChEBI" id="CHEBI:62899"/>
    </ligand>
</feature>
<evidence type="ECO:0000255" key="1">
    <source>
        <dbReference type="HAMAP-Rule" id="MF_00097"/>
    </source>
</evidence>
<reference key="1">
    <citation type="journal article" date="2002" name="Proc. Natl. Acad. Sci. U.S.A.">
        <title>Complete genome sequence and comparative genomic analysis of an emerging human pathogen, serotype V Streptococcus agalactiae.</title>
        <authorList>
            <person name="Tettelin H."/>
            <person name="Masignani V."/>
            <person name="Cieslewicz M.J."/>
            <person name="Eisen J.A."/>
            <person name="Peterson S.N."/>
            <person name="Wessels M.R."/>
            <person name="Paulsen I.T."/>
            <person name="Nelson K.E."/>
            <person name="Margarit I."/>
            <person name="Read T.D."/>
            <person name="Madoff L.C."/>
            <person name="Wolf A.M."/>
            <person name="Beanan M.J."/>
            <person name="Brinkac L.M."/>
            <person name="Daugherty S.C."/>
            <person name="DeBoy R.T."/>
            <person name="Durkin A.S."/>
            <person name="Kolonay J.F."/>
            <person name="Madupu R."/>
            <person name="Lewis M.R."/>
            <person name="Radune D."/>
            <person name="Fedorova N.B."/>
            <person name="Scanlan D."/>
            <person name="Khouri H.M."/>
            <person name="Mulligan S."/>
            <person name="Carty H.A."/>
            <person name="Cline R.T."/>
            <person name="Van Aken S.E."/>
            <person name="Gill J."/>
            <person name="Scarselli M."/>
            <person name="Mora M."/>
            <person name="Iacobini E.T."/>
            <person name="Brettoni C."/>
            <person name="Galli G."/>
            <person name="Mariani M."/>
            <person name="Vegni F."/>
            <person name="Maione D."/>
            <person name="Rinaudo D."/>
            <person name="Rappuoli R."/>
            <person name="Telford J.L."/>
            <person name="Kasper D.L."/>
            <person name="Grandi G."/>
            <person name="Fraser C.M."/>
        </authorList>
    </citation>
    <scope>NUCLEOTIDE SEQUENCE [LARGE SCALE GENOMIC DNA]</scope>
    <source>
        <strain>ATCC BAA-611 / 2603 V/R</strain>
    </source>
</reference>
<dbReference type="EC" id="2.5.1.3" evidence="1"/>
<dbReference type="EMBL" id="AE009948">
    <property type="protein sequence ID" value="AAM99729.1"/>
    <property type="molecule type" value="Genomic_DNA"/>
</dbReference>
<dbReference type="RefSeq" id="NP_687857.1">
    <property type="nucleotide sequence ID" value="NC_004116.1"/>
</dbReference>
<dbReference type="RefSeq" id="WP_000655661.1">
    <property type="nucleotide sequence ID" value="NC_004116.1"/>
</dbReference>
<dbReference type="SMR" id="Q8E092"/>
<dbReference type="STRING" id="208435.SAG0842"/>
<dbReference type="KEGG" id="sag:SAG0842"/>
<dbReference type="PATRIC" id="fig|208435.3.peg.848"/>
<dbReference type="HOGENOM" id="CLU_018272_3_2_9"/>
<dbReference type="OrthoDB" id="9812206at2"/>
<dbReference type="UniPathway" id="UPA00060">
    <property type="reaction ID" value="UER00141"/>
</dbReference>
<dbReference type="Proteomes" id="UP000000821">
    <property type="component" value="Chromosome"/>
</dbReference>
<dbReference type="GO" id="GO:0005737">
    <property type="term" value="C:cytoplasm"/>
    <property type="evidence" value="ECO:0007669"/>
    <property type="project" value="TreeGrafter"/>
</dbReference>
<dbReference type="GO" id="GO:0000287">
    <property type="term" value="F:magnesium ion binding"/>
    <property type="evidence" value="ECO:0007669"/>
    <property type="project" value="UniProtKB-UniRule"/>
</dbReference>
<dbReference type="GO" id="GO:0004789">
    <property type="term" value="F:thiamine-phosphate diphosphorylase activity"/>
    <property type="evidence" value="ECO:0007669"/>
    <property type="project" value="UniProtKB-UniRule"/>
</dbReference>
<dbReference type="GO" id="GO:0009228">
    <property type="term" value="P:thiamine biosynthetic process"/>
    <property type="evidence" value="ECO:0007669"/>
    <property type="project" value="UniProtKB-KW"/>
</dbReference>
<dbReference type="GO" id="GO:0009229">
    <property type="term" value="P:thiamine diphosphate biosynthetic process"/>
    <property type="evidence" value="ECO:0007669"/>
    <property type="project" value="UniProtKB-UniRule"/>
</dbReference>
<dbReference type="CDD" id="cd00564">
    <property type="entry name" value="TMP_TenI"/>
    <property type="match status" value="1"/>
</dbReference>
<dbReference type="FunFam" id="3.20.20.70:FF:000096">
    <property type="entry name" value="Thiamine-phosphate synthase"/>
    <property type="match status" value="1"/>
</dbReference>
<dbReference type="Gene3D" id="3.20.20.70">
    <property type="entry name" value="Aldolase class I"/>
    <property type="match status" value="1"/>
</dbReference>
<dbReference type="HAMAP" id="MF_00097">
    <property type="entry name" value="TMP_synthase"/>
    <property type="match status" value="1"/>
</dbReference>
<dbReference type="InterPro" id="IPR013785">
    <property type="entry name" value="Aldolase_TIM"/>
</dbReference>
<dbReference type="InterPro" id="IPR036206">
    <property type="entry name" value="ThiamineP_synth_sf"/>
</dbReference>
<dbReference type="InterPro" id="IPR022998">
    <property type="entry name" value="ThiamineP_synth_TenI"/>
</dbReference>
<dbReference type="InterPro" id="IPR034291">
    <property type="entry name" value="TMP_synthase"/>
</dbReference>
<dbReference type="NCBIfam" id="TIGR00693">
    <property type="entry name" value="thiE"/>
    <property type="match status" value="1"/>
</dbReference>
<dbReference type="PANTHER" id="PTHR20857">
    <property type="entry name" value="THIAMINE-PHOSPHATE PYROPHOSPHORYLASE"/>
    <property type="match status" value="1"/>
</dbReference>
<dbReference type="PANTHER" id="PTHR20857:SF15">
    <property type="entry name" value="THIAMINE-PHOSPHATE SYNTHASE"/>
    <property type="match status" value="1"/>
</dbReference>
<dbReference type="Pfam" id="PF02581">
    <property type="entry name" value="TMP-TENI"/>
    <property type="match status" value="1"/>
</dbReference>
<dbReference type="SUPFAM" id="SSF51391">
    <property type="entry name" value="Thiamin phosphate synthase"/>
    <property type="match status" value="1"/>
</dbReference>
<proteinExistence type="inferred from homology"/>
<accession>Q8E092</accession>
<name>THIE_STRA5</name>